<protein>
    <recommendedName>
        <fullName evidence="1">Ribosome maturation factor RimM</fullName>
    </recommendedName>
</protein>
<evidence type="ECO:0000255" key="1">
    <source>
        <dbReference type="HAMAP-Rule" id="MF_00014"/>
    </source>
</evidence>
<evidence type="ECO:0000305" key="2"/>
<name>RIMM_BACAH</name>
<accession>A0RHL5</accession>
<proteinExistence type="inferred from homology"/>
<comment type="function">
    <text evidence="1">An accessory protein needed during the final step in the assembly of 30S ribosomal subunit, possibly for assembly of the head region. Essential for efficient processing of 16S rRNA. May be needed both before and after RbfA during the maturation of 16S rRNA. It has affinity for free ribosomal 30S subunits but not for 70S ribosomes.</text>
</comment>
<comment type="subunit">
    <text evidence="1">Binds ribosomal protein uS19.</text>
</comment>
<comment type="subcellular location">
    <subcellularLocation>
        <location evidence="1">Cytoplasm</location>
    </subcellularLocation>
</comment>
<comment type="domain">
    <text evidence="1">The PRC barrel domain binds ribosomal protein uS19.</text>
</comment>
<comment type="similarity">
    <text evidence="1">Belongs to the RimM family.</text>
</comment>
<comment type="sequence caution" evidence="2">
    <conflict type="erroneous initiation">
        <sequence resource="EMBL-CDS" id="ABK86708"/>
    </conflict>
</comment>
<keyword id="KW-0143">Chaperone</keyword>
<keyword id="KW-0963">Cytoplasm</keyword>
<keyword id="KW-0690">Ribosome biogenesis</keyword>
<keyword id="KW-0698">rRNA processing</keyword>
<feature type="chain" id="PRO_0000351719" description="Ribosome maturation factor RimM">
    <location>
        <begin position="1"/>
        <end position="171"/>
    </location>
</feature>
<feature type="domain" description="PRC barrel" evidence="1">
    <location>
        <begin position="97"/>
        <end position="170"/>
    </location>
</feature>
<reference key="1">
    <citation type="journal article" date="2007" name="J. Bacteriol.">
        <title>The complete genome sequence of Bacillus thuringiensis Al Hakam.</title>
        <authorList>
            <person name="Challacombe J.F."/>
            <person name="Altherr M.R."/>
            <person name="Xie G."/>
            <person name="Bhotika S.S."/>
            <person name="Brown N."/>
            <person name="Bruce D."/>
            <person name="Campbell C.S."/>
            <person name="Campbell M.L."/>
            <person name="Chen J."/>
            <person name="Chertkov O."/>
            <person name="Cleland C."/>
            <person name="Dimitrijevic M."/>
            <person name="Doggett N.A."/>
            <person name="Fawcett J.J."/>
            <person name="Glavina T."/>
            <person name="Goodwin L.A."/>
            <person name="Green L.D."/>
            <person name="Han C.S."/>
            <person name="Hill K.K."/>
            <person name="Hitchcock P."/>
            <person name="Jackson P.J."/>
            <person name="Keim P."/>
            <person name="Kewalramani A.R."/>
            <person name="Longmire J."/>
            <person name="Lucas S."/>
            <person name="Malfatti S."/>
            <person name="Martinez D."/>
            <person name="McMurry K."/>
            <person name="Meincke L.J."/>
            <person name="Misra M."/>
            <person name="Moseman B.L."/>
            <person name="Mundt M."/>
            <person name="Munk A.C."/>
            <person name="Okinaka R.T."/>
            <person name="Parson-Quintana B."/>
            <person name="Reilly L.P."/>
            <person name="Richardson P."/>
            <person name="Robinson D.L."/>
            <person name="Saunders E."/>
            <person name="Tapia R."/>
            <person name="Tesmer J.G."/>
            <person name="Thayer N."/>
            <person name="Thompson L.S."/>
            <person name="Tice H."/>
            <person name="Ticknor L.O."/>
            <person name="Wills P.L."/>
            <person name="Gilna P."/>
            <person name="Brettin T.S."/>
        </authorList>
    </citation>
    <scope>NUCLEOTIDE SEQUENCE [LARGE SCALE GENOMIC DNA]</scope>
    <source>
        <strain>Al Hakam</strain>
    </source>
</reference>
<dbReference type="EMBL" id="CP000485">
    <property type="protein sequence ID" value="ABK86708.1"/>
    <property type="status" value="ALT_INIT"/>
    <property type="molecule type" value="Genomic_DNA"/>
</dbReference>
<dbReference type="RefSeq" id="WP_000170268.1">
    <property type="nucleotide sequence ID" value="NC_008600.1"/>
</dbReference>
<dbReference type="SMR" id="A0RHL5"/>
<dbReference type="GeneID" id="93007270"/>
<dbReference type="KEGG" id="btl:BALH_3473"/>
<dbReference type="HOGENOM" id="CLU_077636_3_1_9"/>
<dbReference type="GO" id="GO:0005737">
    <property type="term" value="C:cytoplasm"/>
    <property type="evidence" value="ECO:0007669"/>
    <property type="project" value="UniProtKB-SubCell"/>
</dbReference>
<dbReference type="GO" id="GO:0005840">
    <property type="term" value="C:ribosome"/>
    <property type="evidence" value="ECO:0007669"/>
    <property type="project" value="InterPro"/>
</dbReference>
<dbReference type="GO" id="GO:0043022">
    <property type="term" value="F:ribosome binding"/>
    <property type="evidence" value="ECO:0007669"/>
    <property type="project" value="InterPro"/>
</dbReference>
<dbReference type="GO" id="GO:0042274">
    <property type="term" value="P:ribosomal small subunit biogenesis"/>
    <property type="evidence" value="ECO:0007669"/>
    <property type="project" value="UniProtKB-UniRule"/>
</dbReference>
<dbReference type="GO" id="GO:0006364">
    <property type="term" value="P:rRNA processing"/>
    <property type="evidence" value="ECO:0007669"/>
    <property type="project" value="UniProtKB-UniRule"/>
</dbReference>
<dbReference type="Gene3D" id="2.30.30.240">
    <property type="entry name" value="PRC-barrel domain"/>
    <property type="match status" value="1"/>
</dbReference>
<dbReference type="Gene3D" id="2.40.30.60">
    <property type="entry name" value="RimM"/>
    <property type="match status" value="1"/>
</dbReference>
<dbReference type="HAMAP" id="MF_00014">
    <property type="entry name" value="Ribosome_mat_RimM"/>
    <property type="match status" value="1"/>
</dbReference>
<dbReference type="InterPro" id="IPR027275">
    <property type="entry name" value="PRC-brl_dom"/>
</dbReference>
<dbReference type="InterPro" id="IPR011033">
    <property type="entry name" value="PRC_barrel-like_sf"/>
</dbReference>
<dbReference type="InterPro" id="IPR011961">
    <property type="entry name" value="RimM"/>
</dbReference>
<dbReference type="InterPro" id="IPR002676">
    <property type="entry name" value="RimM_N"/>
</dbReference>
<dbReference type="InterPro" id="IPR036976">
    <property type="entry name" value="RimM_N_sf"/>
</dbReference>
<dbReference type="InterPro" id="IPR009000">
    <property type="entry name" value="Transl_B-barrel_sf"/>
</dbReference>
<dbReference type="NCBIfam" id="TIGR02273">
    <property type="entry name" value="16S_RimM"/>
    <property type="match status" value="1"/>
</dbReference>
<dbReference type="PANTHER" id="PTHR33692">
    <property type="entry name" value="RIBOSOME MATURATION FACTOR RIMM"/>
    <property type="match status" value="1"/>
</dbReference>
<dbReference type="PANTHER" id="PTHR33692:SF1">
    <property type="entry name" value="RIBOSOME MATURATION FACTOR RIMM"/>
    <property type="match status" value="1"/>
</dbReference>
<dbReference type="Pfam" id="PF05239">
    <property type="entry name" value="PRC"/>
    <property type="match status" value="1"/>
</dbReference>
<dbReference type="Pfam" id="PF01782">
    <property type="entry name" value="RimM"/>
    <property type="match status" value="1"/>
</dbReference>
<dbReference type="SUPFAM" id="SSF50346">
    <property type="entry name" value="PRC-barrel domain"/>
    <property type="match status" value="1"/>
</dbReference>
<dbReference type="SUPFAM" id="SSF50447">
    <property type="entry name" value="Translation proteins"/>
    <property type="match status" value="1"/>
</dbReference>
<sequence>MTKWFNVGKIVNTHGVKGEIRVVSRTDFPEERYKVGNTLYISNEKGGEPFPVKITSHRQHKTFDLLTFEGYGNVNEVEQFKGSLLKVPEDQLGELAEGEYYYHEIIGCNVVTEEGEALGTIKEVLSPGANDVWVIKRPKGQDLLIPYIDDVVLQVNIENKLVTIHVMEGLL</sequence>
<organism>
    <name type="scientific">Bacillus thuringiensis (strain Al Hakam)</name>
    <dbReference type="NCBI Taxonomy" id="412694"/>
    <lineage>
        <taxon>Bacteria</taxon>
        <taxon>Bacillati</taxon>
        <taxon>Bacillota</taxon>
        <taxon>Bacilli</taxon>
        <taxon>Bacillales</taxon>
        <taxon>Bacillaceae</taxon>
        <taxon>Bacillus</taxon>
        <taxon>Bacillus cereus group</taxon>
    </lineage>
</organism>
<gene>
    <name evidence="1" type="primary">rimM</name>
    <name type="ordered locus">BALH_3473</name>
</gene>